<organism>
    <name type="scientific">Salmonella paratyphi B (strain ATCC BAA-1250 / SPB7)</name>
    <dbReference type="NCBI Taxonomy" id="1016998"/>
    <lineage>
        <taxon>Bacteria</taxon>
        <taxon>Pseudomonadati</taxon>
        <taxon>Pseudomonadota</taxon>
        <taxon>Gammaproteobacteria</taxon>
        <taxon>Enterobacterales</taxon>
        <taxon>Enterobacteriaceae</taxon>
        <taxon>Salmonella</taxon>
    </lineage>
</organism>
<feature type="chain" id="PRO_1000080431" description="3-hydroxydecanoyl-[acyl-carrier-protein] dehydratase">
    <location>
        <begin position="1"/>
        <end position="172"/>
    </location>
</feature>
<feature type="active site" evidence="1">
    <location>
        <position position="71"/>
    </location>
</feature>
<keyword id="KW-0963">Cytoplasm</keyword>
<keyword id="KW-0275">Fatty acid biosynthesis</keyword>
<keyword id="KW-0276">Fatty acid metabolism</keyword>
<keyword id="KW-0413">Isomerase</keyword>
<keyword id="KW-0444">Lipid biosynthesis</keyword>
<keyword id="KW-0443">Lipid metabolism</keyword>
<keyword id="KW-0456">Lyase</keyword>
<accession>A9N6X4</accession>
<comment type="function">
    <text evidence="1">Necessary for the introduction of cis unsaturation into fatty acids. Catalyzes the dehydration of (3R)-3-hydroxydecanoyl-ACP to E-(2)-decenoyl-ACP and then its isomerization to Z-(3)-decenoyl-ACP. Can catalyze the dehydratase reaction for beta-hydroxyacyl-ACPs with saturated chain lengths up to 16:0, being most active on intermediate chain length.</text>
</comment>
<comment type="catalytic activity">
    <reaction evidence="1">
        <text>a (3R)-hydroxyacyl-[ACP] = a (2E)-enoyl-[ACP] + H2O</text>
        <dbReference type="Rhea" id="RHEA:13097"/>
        <dbReference type="Rhea" id="RHEA-COMP:9925"/>
        <dbReference type="Rhea" id="RHEA-COMP:9945"/>
        <dbReference type="ChEBI" id="CHEBI:15377"/>
        <dbReference type="ChEBI" id="CHEBI:78784"/>
        <dbReference type="ChEBI" id="CHEBI:78827"/>
        <dbReference type="EC" id="4.2.1.59"/>
    </reaction>
</comment>
<comment type="catalytic activity">
    <reaction evidence="1">
        <text>(3R)-hydroxydecanoyl-[ACP] = (2E)-decenoyl-[ACP] + H2O</text>
        <dbReference type="Rhea" id="RHEA:41860"/>
        <dbReference type="Rhea" id="RHEA-COMP:9638"/>
        <dbReference type="Rhea" id="RHEA-COMP:9639"/>
        <dbReference type="ChEBI" id="CHEBI:15377"/>
        <dbReference type="ChEBI" id="CHEBI:78466"/>
        <dbReference type="ChEBI" id="CHEBI:78467"/>
    </reaction>
</comment>
<comment type="catalytic activity">
    <reaction evidence="1">
        <text>(2E)-decenoyl-[ACP] = (3Z)-decenoyl-[ACP]</text>
        <dbReference type="Rhea" id="RHEA:23568"/>
        <dbReference type="Rhea" id="RHEA-COMP:9639"/>
        <dbReference type="Rhea" id="RHEA-COMP:9927"/>
        <dbReference type="ChEBI" id="CHEBI:78467"/>
        <dbReference type="ChEBI" id="CHEBI:78798"/>
        <dbReference type="EC" id="5.3.3.14"/>
    </reaction>
</comment>
<comment type="pathway">
    <text evidence="1">Lipid metabolism; fatty acid biosynthesis.</text>
</comment>
<comment type="subunit">
    <text evidence="1">Homodimer.</text>
</comment>
<comment type="subcellular location">
    <subcellularLocation>
        <location evidence="1">Cytoplasm</location>
    </subcellularLocation>
</comment>
<comment type="similarity">
    <text evidence="1">Belongs to the thioester dehydratase family. FabA subfamily.</text>
</comment>
<proteinExistence type="inferred from homology"/>
<protein>
    <recommendedName>
        <fullName evidence="1">3-hydroxydecanoyl-[acyl-carrier-protein] dehydratase</fullName>
        <ecNumber evidence="1">4.2.1.59</ecNumber>
    </recommendedName>
    <alternativeName>
        <fullName evidence="1">3-hydroxyacyl-[acyl-carrier-protein] dehydratase FabA</fullName>
    </alternativeName>
    <alternativeName>
        <fullName evidence="1">Beta-hydroxydecanoyl thioester dehydrase</fullName>
    </alternativeName>
    <alternativeName>
        <fullName evidence="1">Trans-2-decenoyl-[acyl-carrier-protein] isomerase</fullName>
        <ecNumber evidence="1">5.3.3.14</ecNumber>
    </alternativeName>
</protein>
<name>FABA_SALPB</name>
<dbReference type="EC" id="4.2.1.59" evidence="1"/>
<dbReference type="EC" id="5.3.3.14" evidence="1"/>
<dbReference type="EMBL" id="CP000886">
    <property type="protein sequence ID" value="ABX67871.1"/>
    <property type="molecule type" value="Genomic_DNA"/>
</dbReference>
<dbReference type="RefSeq" id="WP_000227928.1">
    <property type="nucleotide sequence ID" value="NC_010102.1"/>
</dbReference>
<dbReference type="SMR" id="A9N6X4"/>
<dbReference type="KEGG" id="spq:SPAB_02491"/>
<dbReference type="PATRIC" id="fig|1016998.12.peg.2358"/>
<dbReference type="HOGENOM" id="CLU_097925_0_0_6"/>
<dbReference type="BioCyc" id="SENT1016998:SPAB_RS10130-MONOMER"/>
<dbReference type="UniPathway" id="UPA00094"/>
<dbReference type="Proteomes" id="UP000008556">
    <property type="component" value="Chromosome"/>
</dbReference>
<dbReference type="GO" id="GO:0005737">
    <property type="term" value="C:cytoplasm"/>
    <property type="evidence" value="ECO:0007669"/>
    <property type="project" value="UniProtKB-SubCell"/>
</dbReference>
<dbReference type="GO" id="GO:0019171">
    <property type="term" value="F:(3R)-hydroxyacyl-[acyl-carrier-protein] dehydratase activity"/>
    <property type="evidence" value="ECO:0007669"/>
    <property type="project" value="UniProtKB-UniRule"/>
</dbReference>
<dbReference type="GO" id="GO:0034017">
    <property type="term" value="F:trans-2-decenoyl-acyl-carrier-protein isomerase activity"/>
    <property type="evidence" value="ECO:0007669"/>
    <property type="project" value="UniProtKB-UniRule"/>
</dbReference>
<dbReference type="GO" id="GO:0006636">
    <property type="term" value="P:unsaturated fatty acid biosynthetic process"/>
    <property type="evidence" value="ECO:0007669"/>
    <property type="project" value="UniProtKB-UniRule"/>
</dbReference>
<dbReference type="CDD" id="cd01287">
    <property type="entry name" value="FabA"/>
    <property type="match status" value="1"/>
</dbReference>
<dbReference type="FunFam" id="3.10.129.10:FF:000003">
    <property type="entry name" value="3-hydroxydecanoyl-[acyl-carrier-protein] dehydratase"/>
    <property type="match status" value="1"/>
</dbReference>
<dbReference type="Gene3D" id="3.10.129.10">
    <property type="entry name" value="Hotdog Thioesterase"/>
    <property type="match status" value="1"/>
</dbReference>
<dbReference type="HAMAP" id="MF_00405">
    <property type="entry name" value="FabA"/>
    <property type="match status" value="1"/>
</dbReference>
<dbReference type="InterPro" id="IPR010083">
    <property type="entry name" value="FabA"/>
</dbReference>
<dbReference type="InterPro" id="IPR013114">
    <property type="entry name" value="FabA_FabZ"/>
</dbReference>
<dbReference type="InterPro" id="IPR029069">
    <property type="entry name" value="HotDog_dom_sf"/>
</dbReference>
<dbReference type="NCBIfam" id="TIGR01749">
    <property type="entry name" value="fabA"/>
    <property type="match status" value="1"/>
</dbReference>
<dbReference type="NCBIfam" id="NF003509">
    <property type="entry name" value="PRK05174.1"/>
    <property type="match status" value="1"/>
</dbReference>
<dbReference type="PANTHER" id="PTHR30272">
    <property type="entry name" value="3-HYDROXYACYL-[ACYL-CARRIER-PROTEIN] DEHYDRATASE"/>
    <property type="match status" value="1"/>
</dbReference>
<dbReference type="PANTHER" id="PTHR30272:SF8">
    <property type="entry name" value="3-HYDROXYDECANOYL-[ACYL-CARRIER-PROTEIN] DEHYDRATASE"/>
    <property type="match status" value="1"/>
</dbReference>
<dbReference type="Pfam" id="PF07977">
    <property type="entry name" value="FabA"/>
    <property type="match status" value="1"/>
</dbReference>
<dbReference type="SUPFAM" id="SSF54637">
    <property type="entry name" value="Thioesterase/thiol ester dehydrase-isomerase"/>
    <property type="match status" value="1"/>
</dbReference>
<reference key="1">
    <citation type="submission" date="2007-11" db="EMBL/GenBank/DDBJ databases">
        <authorList>
            <consortium name="The Salmonella enterica serovar Paratyphi B Genome Sequencing Project"/>
            <person name="McClelland M."/>
            <person name="Sanderson E.K."/>
            <person name="Porwollik S."/>
            <person name="Spieth J."/>
            <person name="Clifton W.S."/>
            <person name="Fulton R."/>
            <person name="Cordes M."/>
            <person name="Wollam A."/>
            <person name="Shah N."/>
            <person name="Pepin K."/>
            <person name="Bhonagiri V."/>
            <person name="Nash W."/>
            <person name="Johnson M."/>
            <person name="Thiruvilangam P."/>
            <person name="Wilson R."/>
        </authorList>
    </citation>
    <scope>NUCLEOTIDE SEQUENCE [LARGE SCALE GENOMIC DNA]</scope>
    <source>
        <strain>ATCC BAA-1250 / SPB7</strain>
    </source>
</reference>
<evidence type="ECO:0000255" key="1">
    <source>
        <dbReference type="HAMAP-Rule" id="MF_00405"/>
    </source>
</evidence>
<gene>
    <name evidence="1" type="primary">fabA</name>
    <name type="ordered locus">SPAB_02491</name>
</gene>
<sequence length="172" mass="19047">MVDKRESYTKEDLLASGRGELFGAKGPQLPAPNMLMMDRVVKMTETGGNFDKGYVEAELDINPDLWFFGCHFIGDPVMPGCLGLDAMWQLVGFYLGWLGGEGKGRALGVGEVKFTGQVLPTARKVTYRIHFKRIVNRRLIMGLADGEVLVDGRLIYTAHDLKVGLFQDTSAF</sequence>